<protein>
    <recommendedName>
        <fullName>Putative ammonium transporter 1</fullName>
    </recommendedName>
</protein>
<feature type="chain" id="PRO_0000139751" description="Putative ammonium transporter 1">
    <location>
        <begin position="1"/>
        <end position="534"/>
    </location>
</feature>
<feature type="transmembrane region" description="Helical" evidence="1">
    <location>
        <begin position="31"/>
        <end position="51"/>
    </location>
</feature>
<feature type="transmembrane region" description="Helical" evidence="1">
    <location>
        <begin position="69"/>
        <end position="89"/>
    </location>
</feature>
<feature type="transmembrane region" description="Helical" evidence="1">
    <location>
        <begin position="115"/>
        <end position="135"/>
    </location>
</feature>
<feature type="transmembrane region" description="Helical" evidence="1">
    <location>
        <begin position="139"/>
        <end position="159"/>
    </location>
</feature>
<feature type="transmembrane region" description="Helical" evidence="1">
    <location>
        <begin position="184"/>
        <end position="204"/>
    </location>
</feature>
<feature type="transmembrane region" description="Helical" evidence="1">
    <location>
        <begin position="223"/>
        <end position="243"/>
    </location>
</feature>
<feature type="transmembrane region" description="Helical" evidence="1">
    <location>
        <begin position="263"/>
        <end position="283"/>
    </location>
</feature>
<feature type="transmembrane region" description="Helical" evidence="1">
    <location>
        <begin position="291"/>
        <end position="311"/>
    </location>
</feature>
<feature type="transmembrane region" description="Helical" evidence="1">
    <location>
        <begin position="318"/>
        <end position="338"/>
    </location>
</feature>
<feature type="transmembrane region" description="Helical" evidence="1">
    <location>
        <begin position="346"/>
        <end position="366"/>
    </location>
</feature>
<feature type="transmembrane region" description="Helical" evidence="1">
    <location>
        <begin position="401"/>
        <end position="421"/>
    </location>
</feature>
<reference key="1">
    <citation type="journal article" date="1998" name="Science">
        <title>Genome sequence of the nematode C. elegans: a platform for investigating biology.</title>
        <authorList>
            <consortium name="The C. elegans sequencing consortium"/>
        </authorList>
    </citation>
    <scope>NUCLEOTIDE SEQUENCE [LARGE SCALE GENOMIC DNA]</scope>
    <source>
        <strain>Bristol N2</strain>
    </source>
</reference>
<keyword id="KW-0924">Ammonia transport</keyword>
<keyword id="KW-0472">Membrane</keyword>
<keyword id="KW-1185">Reference proteome</keyword>
<keyword id="KW-0812">Transmembrane</keyword>
<keyword id="KW-1133">Transmembrane helix</keyword>
<keyword id="KW-0813">Transport</keyword>
<sequence length="534" mass="58491">MTTPTNFTTEIDKLHAEITRLETGFYENVNSFFLCSMALIIFFMQCGFAYLEAGAVRSKNTTNILIKNLLDSCICIIGYWAIGWALAYGDSGEGVNLFVGHSQFFLSGFSDYPRFFFQYVFSATAATIVSGAVAERCEFITYVTYCTVISTFIYPVLTHWGWTENGWMAKGITSGIIDTKYDDFAGSGLVHLCGGSISFLAAWIMGPRIGKFPDDEDDESDEILGHSVPFTALGGFILMFGFLAFNGGSVASISHAGDGHTVALAMINTILSGAFAALIYLGVHYYQHGKWTLLLTINACLSGMVAACAGCNKMEPWACIWVGLGAGLIYLAFSKLMIRLKIDDPLDAFAVHAGGGFWGLMSSSIISHGGVAYALADAVSGAKNSGDHLTQAFAQLGWQMICALAIIAWSLGVMLPIFWILKKTGKLRVSEEVEINGLDVFKHGEMAYPLRAYGHGWHDFERANKIQAFSAKITVGEGKNTRIMKIHPEMSIEQLASVYDRSGNIIPMPKKSRTLFTNSAERKMSQMMYDENKM</sequence>
<proteinExistence type="inferred from homology"/>
<gene>
    <name type="primary">amt-1</name>
    <name type="ORF">C05E11.4</name>
</gene>
<dbReference type="EMBL" id="FO080371">
    <property type="protein sequence ID" value="CCD63261.1"/>
    <property type="molecule type" value="Genomic_DNA"/>
</dbReference>
<dbReference type="PIR" id="T15414">
    <property type="entry name" value="T15414"/>
</dbReference>
<dbReference type="RefSeq" id="NP_508784.1">
    <property type="nucleotide sequence ID" value="NM_076383.5"/>
</dbReference>
<dbReference type="SMR" id="P54145"/>
<dbReference type="FunCoup" id="P54145">
    <property type="interactions" value="22"/>
</dbReference>
<dbReference type="STRING" id="6239.C05E11.4.1"/>
<dbReference type="PaxDb" id="6239-C05E11.4"/>
<dbReference type="PeptideAtlas" id="P54145"/>
<dbReference type="EnsemblMetazoa" id="C05E11.4.1">
    <property type="protein sequence ID" value="C05E11.4.1"/>
    <property type="gene ID" value="WBGene00000133"/>
</dbReference>
<dbReference type="GeneID" id="180729"/>
<dbReference type="KEGG" id="cel:CELE_C05E11.4"/>
<dbReference type="UCSC" id="C05E11.4">
    <property type="organism name" value="c. elegans"/>
</dbReference>
<dbReference type="AGR" id="WB:WBGene00000133"/>
<dbReference type="CTD" id="180729"/>
<dbReference type="WormBase" id="C05E11.4">
    <property type="protein sequence ID" value="CE06770"/>
    <property type="gene ID" value="WBGene00000133"/>
    <property type="gene designation" value="amt-1"/>
</dbReference>
<dbReference type="eggNOG" id="KOG0682">
    <property type="taxonomic scope" value="Eukaryota"/>
</dbReference>
<dbReference type="GeneTree" id="ENSGT00530000064546"/>
<dbReference type="HOGENOM" id="CLU_000445_33_1_1"/>
<dbReference type="InParanoid" id="P54145"/>
<dbReference type="OMA" id="CGFAYLE"/>
<dbReference type="OrthoDB" id="534912at2759"/>
<dbReference type="PhylomeDB" id="P54145"/>
<dbReference type="PRO" id="PR:P54145"/>
<dbReference type="Proteomes" id="UP000001940">
    <property type="component" value="Chromosome X"/>
</dbReference>
<dbReference type="Bgee" id="WBGene00000133">
    <property type="expression patterns" value="Expressed in larva and 1 other cell type or tissue"/>
</dbReference>
<dbReference type="GO" id="GO:0005886">
    <property type="term" value="C:plasma membrane"/>
    <property type="evidence" value="ECO:0000318"/>
    <property type="project" value="GO_Central"/>
</dbReference>
<dbReference type="GO" id="GO:0008519">
    <property type="term" value="F:ammonium channel activity"/>
    <property type="evidence" value="ECO:0000318"/>
    <property type="project" value="GO_Central"/>
</dbReference>
<dbReference type="GO" id="GO:0097272">
    <property type="term" value="P:ammonium homeostasis"/>
    <property type="evidence" value="ECO:0000318"/>
    <property type="project" value="GO_Central"/>
</dbReference>
<dbReference type="GO" id="GO:0072488">
    <property type="term" value="P:ammonium transmembrane transport"/>
    <property type="evidence" value="ECO:0000318"/>
    <property type="project" value="GO_Central"/>
</dbReference>
<dbReference type="FunFam" id="1.10.3430.10:FF:000010">
    <property type="entry name" value="Ammonium transporter"/>
    <property type="match status" value="1"/>
</dbReference>
<dbReference type="Gene3D" id="1.10.3430.10">
    <property type="entry name" value="Ammonium transporter AmtB like domains"/>
    <property type="match status" value="1"/>
</dbReference>
<dbReference type="InterPro" id="IPR029020">
    <property type="entry name" value="Ammonium/urea_transptr"/>
</dbReference>
<dbReference type="InterPro" id="IPR001905">
    <property type="entry name" value="Ammonium_transpt"/>
</dbReference>
<dbReference type="InterPro" id="IPR018047">
    <property type="entry name" value="Ammonium_transpt_CS"/>
</dbReference>
<dbReference type="InterPro" id="IPR024041">
    <property type="entry name" value="NH4_transpt_AmtB-like_dom"/>
</dbReference>
<dbReference type="NCBIfam" id="TIGR00836">
    <property type="entry name" value="amt"/>
    <property type="match status" value="1"/>
</dbReference>
<dbReference type="PANTHER" id="PTHR11730">
    <property type="entry name" value="AMMONIUM TRANSPORTER"/>
    <property type="match status" value="1"/>
</dbReference>
<dbReference type="PANTHER" id="PTHR11730:SF118">
    <property type="entry name" value="AMMONIUM TRANSPORTER 1-RELATED"/>
    <property type="match status" value="1"/>
</dbReference>
<dbReference type="Pfam" id="PF00909">
    <property type="entry name" value="Ammonium_transp"/>
    <property type="match status" value="1"/>
</dbReference>
<dbReference type="SUPFAM" id="SSF111352">
    <property type="entry name" value="Ammonium transporter"/>
    <property type="match status" value="1"/>
</dbReference>
<dbReference type="PROSITE" id="PS01219">
    <property type="entry name" value="AMMONIUM_TRANSP"/>
    <property type="match status" value="1"/>
</dbReference>
<comment type="function">
    <text evidence="2">Involved in the uptake of ammonia.</text>
</comment>
<comment type="subcellular location">
    <subcellularLocation>
        <location evidence="2">Membrane</location>
        <topology evidence="2">Multi-pass membrane protein</topology>
    </subcellularLocation>
</comment>
<comment type="similarity">
    <text evidence="2">Belongs to the ammonia transporter channel (TC 1.A.11.2) family.</text>
</comment>
<name>AMT1_CAEEL</name>
<accession>P54145</accession>
<evidence type="ECO:0000255" key="1"/>
<evidence type="ECO:0000305" key="2"/>
<organism>
    <name type="scientific">Caenorhabditis elegans</name>
    <dbReference type="NCBI Taxonomy" id="6239"/>
    <lineage>
        <taxon>Eukaryota</taxon>
        <taxon>Metazoa</taxon>
        <taxon>Ecdysozoa</taxon>
        <taxon>Nematoda</taxon>
        <taxon>Chromadorea</taxon>
        <taxon>Rhabditida</taxon>
        <taxon>Rhabditina</taxon>
        <taxon>Rhabditomorpha</taxon>
        <taxon>Rhabditoidea</taxon>
        <taxon>Rhabditidae</taxon>
        <taxon>Peloderinae</taxon>
        <taxon>Caenorhabditis</taxon>
    </lineage>
</organism>